<keyword id="KW-0274">FAD</keyword>
<keyword id="KW-0285">Flavoprotein</keyword>
<keyword id="KW-0489">Methyltransferase</keyword>
<keyword id="KW-0521">NADP</keyword>
<keyword id="KW-0545">Nucleotide biosynthesis</keyword>
<keyword id="KW-1185">Reference proteome</keyword>
<keyword id="KW-0808">Transferase</keyword>
<protein>
    <recommendedName>
        <fullName evidence="1">Flavin-dependent thymidylate synthase</fullName>
        <shortName evidence="1">FDTS</shortName>
        <ecNumber evidence="1">2.1.1.148</ecNumber>
    </recommendedName>
    <alternativeName>
        <fullName evidence="1">FAD-dependent thymidylate synthase</fullName>
    </alternativeName>
    <alternativeName>
        <fullName evidence="1">Thymidylate synthase ThyX</fullName>
        <shortName evidence="1">TS</shortName>
        <shortName evidence="1">TSase</shortName>
    </alternativeName>
</protein>
<gene>
    <name evidence="1" type="primary">thyX</name>
    <name type="ordered locus">sll1635</name>
</gene>
<comment type="function">
    <text evidence="1">Catalyzes the reductive methylation of 2'-deoxyuridine-5'-monophosphate (dUMP) to 2'-deoxythymidine-5'-monophosphate (dTMP) while utilizing 5,10-methylenetetrahydrofolate (mTHF) as the methyl donor, and NADPH and FADH(2) as the reductant.</text>
</comment>
<comment type="catalytic activity">
    <reaction evidence="1">
        <text>dUMP + (6R)-5,10-methylene-5,6,7,8-tetrahydrofolate + NADPH + H(+) = dTMP + (6S)-5,6,7,8-tetrahydrofolate + NADP(+)</text>
        <dbReference type="Rhea" id="RHEA:29043"/>
        <dbReference type="ChEBI" id="CHEBI:15378"/>
        <dbReference type="ChEBI" id="CHEBI:15636"/>
        <dbReference type="ChEBI" id="CHEBI:57453"/>
        <dbReference type="ChEBI" id="CHEBI:57783"/>
        <dbReference type="ChEBI" id="CHEBI:58349"/>
        <dbReference type="ChEBI" id="CHEBI:63528"/>
        <dbReference type="ChEBI" id="CHEBI:246422"/>
        <dbReference type="EC" id="2.1.1.148"/>
    </reaction>
</comment>
<comment type="cofactor">
    <cofactor evidence="1">
        <name>FAD</name>
        <dbReference type="ChEBI" id="CHEBI:57692"/>
    </cofactor>
    <text evidence="1">Binds 4 FAD per tetramer. Each FAD binding site is formed by three monomers.</text>
</comment>
<comment type="pathway">
    <text evidence="1">Pyrimidine metabolism; dTTP biosynthesis.</text>
</comment>
<comment type="subunit">
    <text evidence="1">Homotetramer.</text>
</comment>
<comment type="similarity">
    <text evidence="1">Belongs to the thymidylate synthase ThyX family.</text>
</comment>
<accession>P73053</accession>
<organism>
    <name type="scientific">Synechocystis sp. (strain ATCC 27184 / PCC 6803 / Kazusa)</name>
    <dbReference type="NCBI Taxonomy" id="1111708"/>
    <lineage>
        <taxon>Bacteria</taxon>
        <taxon>Bacillati</taxon>
        <taxon>Cyanobacteriota</taxon>
        <taxon>Cyanophyceae</taxon>
        <taxon>Synechococcales</taxon>
        <taxon>Merismopediaceae</taxon>
        <taxon>Synechocystis</taxon>
    </lineage>
</organism>
<sequence>MDVRFISLTKPEIVIDGEPLSPEGLIAYCARVSSPNQENPNYTKLLQFCIREGHWSIFEMVDMTLEITTTRAIAPQILRHRSFSFQEFSLRYSCATEYECYEARRQDVKNRQNSLDDFDESTKKWFNQAQAAVWEKSHQLYEEALAKGIAKECARSILPLNTVTRLYMKGSVRSWIHYFSVRCDQATQKEHREIALAARKIFMKHFPTVAAALEW</sequence>
<evidence type="ECO:0000255" key="1">
    <source>
        <dbReference type="HAMAP-Rule" id="MF_01408"/>
    </source>
</evidence>
<evidence type="ECO:0000255" key="2">
    <source>
        <dbReference type="PROSITE-ProRule" id="PRU00661"/>
    </source>
</evidence>
<proteinExistence type="inferred from homology"/>
<dbReference type="EC" id="2.1.1.148" evidence="1"/>
<dbReference type="EMBL" id="BA000022">
    <property type="protein sequence ID" value="BAA17074.1"/>
    <property type="molecule type" value="Genomic_DNA"/>
</dbReference>
<dbReference type="PIR" id="S75160">
    <property type="entry name" value="S75160"/>
</dbReference>
<dbReference type="SMR" id="P73053"/>
<dbReference type="STRING" id="1148.gene:10497935"/>
<dbReference type="PaxDb" id="1148-1652150"/>
<dbReference type="EnsemblBacteria" id="BAA17074">
    <property type="protein sequence ID" value="BAA17074"/>
    <property type="gene ID" value="BAA17074"/>
</dbReference>
<dbReference type="KEGG" id="syn:sll1635"/>
<dbReference type="eggNOG" id="COG1351">
    <property type="taxonomic scope" value="Bacteria"/>
</dbReference>
<dbReference type="InParanoid" id="P73053"/>
<dbReference type="PhylomeDB" id="P73053"/>
<dbReference type="UniPathway" id="UPA00575"/>
<dbReference type="Proteomes" id="UP000001425">
    <property type="component" value="Chromosome"/>
</dbReference>
<dbReference type="GO" id="GO:0050660">
    <property type="term" value="F:flavin adenine dinucleotide binding"/>
    <property type="evidence" value="ECO:0000318"/>
    <property type="project" value="GO_Central"/>
</dbReference>
<dbReference type="GO" id="GO:0070402">
    <property type="term" value="F:NADPH binding"/>
    <property type="evidence" value="ECO:0000318"/>
    <property type="project" value="GO_Central"/>
</dbReference>
<dbReference type="GO" id="GO:0050797">
    <property type="term" value="F:thymidylate synthase (FAD) activity"/>
    <property type="evidence" value="ECO:0000318"/>
    <property type="project" value="GO_Central"/>
</dbReference>
<dbReference type="GO" id="GO:0004799">
    <property type="term" value="F:thymidylate synthase activity"/>
    <property type="evidence" value="ECO:0000318"/>
    <property type="project" value="GO_Central"/>
</dbReference>
<dbReference type="GO" id="GO:0006231">
    <property type="term" value="P:dTMP biosynthetic process"/>
    <property type="evidence" value="ECO:0000318"/>
    <property type="project" value="GO_Central"/>
</dbReference>
<dbReference type="GO" id="GO:0006235">
    <property type="term" value="P:dTTP biosynthetic process"/>
    <property type="evidence" value="ECO:0007669"/>
    <property type="project" value="UniProtKB-UniRule"/>
</dbReference>
<dbReference type="GO" id="GO:0032259">
    <property type="term" value="P:methylation"/>
    <property type="evidence" value="ECO:0007669"/>
    <property type="project" value="UniProtKB-KW"/>
</dbReference>
<dbReference type="CDD" id="cd20175">
    <property type="entry name" value="ThyX"/>
    <property type="match status" value="1"/>
</dbReference>
<dbReference type="Gene3D" id="1.20.5.3070">
    <property type="match status" value="1"/>
</dbReference>
<dbReference type="Gene3D" id="3.30.1360.170">
    <property type="match status" value="1"/>
</dbReference>
<dbReference type="HAMAP" id="MF_01408">
    <property type="entry name" value="ThyX"/>
    <property type="match status" value="1"/>
</dbReference>
<dbReference type="InterPro" id="IPR003669">
    <property type="entry name" value="Thymidylate_synthase_ThyX"/>
</dbReference>
<dbReference type="InterPro" id="IPR036098">
    <property type="entry name" value="Thymidylate_synthase_ThyX_sf"/>
</dbReference>
<dbReference type="NCBIfam" id="TIGR02170">
    <property type="entry name" value="thyX"/>
    <property type="match status" value="1"/>
</dbReference>
<dbReference type="PANTHER" id="PTHR34934">
    <property type="entry name" value="FLAVIN-DEPENDENT THYMIDYLATE SYNTHASE"/>
    <property type="match status" value="1"/>
</dbReference>
<dbReference type="PANTHER" id="PTHR34934:SF1">
    <property type="entry name" value="FLAVIN-DEPENDENT THYMIDYLATE SYNTHASE"/>
    <property type="match status" value="1"/>
</dbReference>
<dbReference type="Pfam" id="PF02511">
    <property type="entry name" value="Thy1"/>
    <property type="match status" value="1"/>
</dbReference>
<dbReference type="SUPFAM" id="SSF69796">
    <property type="entry name" value="Thymidylate synthase-complementing protein Thy1"/>
    <property type="match status" value="1"/>
</dbReference>
<dbReference type="PROSITE" id="PS51331">
    <property type="entry name" value="THYX"/>
    <property type="match status" value="1"/>
</dbReference>
<feature type="chain" id="PRO_0000175578" description="Flavin-dependent thymidylate synthase">
    <location>
        <begin position="1"/>
        <end position="215"/>
    </location>
</feature>
<feature type="domain" description="ThyX" evidence="2">
    <location>
        <begin position="1"/>
        <end position="215"/>
    </location>
</feature>
<feature type="short sequence motif" description="ThyX motif" evidence="1">
    <location>
        <begin position="79"/>
        <end position="89"/>
    </location>
</feature>
<feature type="active site" description="Involved in ionization of N3 of dUMP, leading to its activation" evidence="1">
    <location>
        <position position="182"/>
    </location>
</feature>
<feature type="binding site" evidence="1">
    <location>
        <position position="56"/>
    </location>
    <ligand>
        <name>FAD</name>
        <dbReference type="ChEBI" id="CHEBI:57692"/>
        <note>ligand shared between neighboring subunits</note>
    </ligand>
</feature>
<feature type="binding site" evidence="1">
    <location>
        <begin position="76"/>
        <end position="79"/>
    </location>
    <ligand>
        <name>dUMP</name>
        <dbReference type="ChEBI" id="CHEBI:246422"/>
        <note>ligand shared between dimeric partners</note>
    </ligand>
</feature>
<feature type="binding site" evidence="1">
    <location>
        <begin position="79"/>
        <end position="81"/>
    </location>
    <ligand>
        <name>FAD</name>
        <dbReference type="ChEBI" id="CHEBI:57692"/>
        <note>ligand shared between neighboring subunits</note>
    </ligand>
</feature>
<feature type="binding site" description="in other chain" evidence="1">
    <location>
        <begin position="87"/>
        <end position="91"/>
    </location>
    <ligand>
        <name>dUMP</name>
        <dbReference type="ChEBI" id="CHEBI:246422"/>
        <note>ligand shared between dimeric partners</note>
    </ligand>
</feature>
<feature type="binding site" evidence="1">
    <location>
        <position position="87"/>
    </location>
    <ligand>
        <name>FAD</name>
        <dbReference type="ChEBI" id="CHEBI:57692"/>
        <note>ligand shared between neighboring subunits</note>
    </ligand>
</feature>
<feature type="binding site" description="in other chain" evidence="1">
    <location>
        <position position="155"/>
    </location>
    <ligand>
        <name>dUMP</name>
        <dbReference type="ChEBI" id="CHEBI:246422"/>
        <note>ligand shared between dimeric partners</note>
    </ligand>
</feature>
<feature type="binding site" evidence="1">
    <location>
        <position position="177"/>
    </location>
    <ligand>
        <name>FAD</name>
        <dbReference type="ChEBI" id="CHEBI:57692"/>
        <note>ligand shared between neighboring subunits</note>
    </ligand>
</feature>
<feature type="binding site" evidence="1">
    <location>
        <position position="182"/>
    </location>
    <ligand>
        <name>dUMP</name>
        <dbReference type="ChEBI" id="CHEBI:246422"/>
        <note>ligand shared between dimeric partners</note>
    </ligand>
</feature>
<name>THYX_SYNY3</name>
<reference key="1">
    <citation type="journal article" date="1996" name="DNA Res.">
        <title>Sequence analysis of the genome of the unicellular cyanobacterium Synechocystis sp. strain PCC6803. II. Sequence determination of the entire genome and assignment of potential protein-coding regions.</title>
        <authorList>
            <person name="Kaneko T."/>
            <person name="Sato S."/>
            <person name="Kotani H."/>
            <person name="Tanaka A."/>
            <person name="Asamizu E."/>
            <person name="Nakamura Y."/>
            <person name="Miyajima N."/>
            <person name="Hirosawa M."/>
            <person name="Sugiura M."/>
            <person name="Sasamoto S."/>
            <person name="Kimura T."/>
            <person name="Hosouchi T."/>
            <person name="Matsuno A."/>
            <person name="Muraki A."/>
            <person name="Nakazaki N."/>
            <person name="Naruo K."/>
            <person name="Okumura S."/>
            <person name="Shimpo S."/>
            <person name="Takeuchi C."/>
            <person name="Wada T."/>
            <person name="Watanabe A."/>
            <person name="Yamada M."/>
            <person name="Yasuda M."/>
            <person name="Tabata S."/>
        </authorList>
    </citation>
    <scope>NUCLEOTIDE SEQUENCE [LARGE SCALE GENOMIC DNA]</scope>
    <source>
        <strain>ATCC 27184 / PCC 6803 / Kazusa</strain>
    </source>
</reference>